<reference key="1">
    <citation type="journal article" date="2011" name="Proc. Natl. Acad. Sci. U.S.A.">
        <title>Obligate biotrophy features unraveled by the genomic analysis of rust fungi.</title>
        <authorList>
            <person name="Duplessis S."/>
            <person name="Cuomo C.A."/>
            <person name="Lin Y.-C."/>
            <person name="Aerts A."/>
            <person name="Tisserant E."/>
            <person name="Veneault-Fourrey C."/>
            <person name="Joly D.L."/>
            <person name="Hacquard S."/>
            <person name="Amselem J."/>
            <person name="Cantarel B.L."/>
            <person name="Chiu R."/>
            <person name="Coutinho P.M."/>
            <person name="Feau N."/>
            <person name="Field M."/>
            <person name="Frey P."/>
            <person name="Gelhaye E."/>
            <person name="Goldberg J."/>
            <person name="Grabherr M.G."/>
            <person name="Kodira C.D."/>
            <person name="Kohler A."/>
            <person name="Kuees U."/>
            <person name="Lindquist E.A."/>
            <person name="Lucas S.M."/>
            <person name="Mago R."/>
            <person name="Mauceli E."/>
            <person name="Morin E."/>
            <person name="Murat C."/>
            <person name="Pangilinan J.L."/>
            <person name="Park R."/>
            <person name="Pearson M."/>
            <person name="Quesneville H."/>
            <person name="Rouhier N."/>
            <person name="Sakthikumar S."/>
            <person name="Salamov A.A."/>
            <person name="Schmutz J."/>
            <person name="Selles B."/>
            <person name="Shapiro H."/>
            <person name="Tanguay P."/>
            <person name="Tuskan G.A."/>
            <person name="Henrissat B."/>
            <person name="Van de Peer Y."/>
            <person name="Rouze P."/>
            <person name="Ellis J.G."/>
            <person name="Dodds P.N."/>
            <person name="Schein J.E."/>
            <person name="Zhong S."/>
            <person name="Hamelin R.C."/>
            <person name="Grigoriev I.V."/>
            <person name="Szabo L.J."/>
            <person name="Martin F."/>
        </authorList>
    </citation>
    <scope>NUCLEOTIDE SEQUENCE [LARGE SCALE GENOMIC DNA]</scope>
    <source>
        <strain>CRL 75-36-700-3 / race SCCL</strain>
    </source>
</reference>
<reference key="2">
    <citation type="journal article" date="2017" name="G3 (Bethesda)">
        <title>Comparative analysis highlights variable genome content of wheat rusts and divergence of the mating loci.</title>
        <authorList>
            <person name="Cuomo C.A."/>
            <person name="Bakkeren G."/>
            <person name="Khalil H.B."/>
            <person name="Panwar V."/>
            <person name="Joly D."/>
            <person name="Linning R."/>
            <person name="Sakthikumar S."/>
            <person name="Song X."/>
            <person name="Adiconis X."/>
            <person name="Fan L."/>
            <person name="Goldberg J.M."/>
            <person name="Levin J.Z."/>
            <person name="Young S."/>
            <person name="Zeng Q."/>
            <person name="Anikster Y."/>
            <person name="Bruce M."/>
            <person name="Wang M."/>
            <person name="Yin C."/>
            <person name="McCallum B."/>
            <person name="Szabo L.J."/>
            <person name="Hulbert S."/>
            <person name="Chen X."/>
            <person name="Fellers J.P."/>
        </authorList>
    </citation>
    <scope>GENOME REANNOTATION</scope>
    <source>
        <strain>CRL 75-36-700-3 / race SCCL</strain>
    </source>
</reference>
<accession>E3L3Q8</accession>
<feature type="chain" id="PRO_0000407666" description="Methionine aminopeptidase 2">
    <location>
        <begin position="1"/>
        <end position="456"/>
    </location>
</feature>
<feature type="region of interest" description="Disordered" evidence="2">
    <location>
        <begin position="1"/>
        <end position="127"/>
    </location>
</feature>
<feature type="compositionally biased region" description="Pro residues" evidence="2">
    <location>
        <begin position="1"/>
        <end position="11"/>
    </location>
</feature>
<feature type="compositionally biased region" description="Acidic residues" evidence="2">
    <location>
        <begin position="31"/>
        <end position="45"/>
    </location>
</feature>
<feature type="compositionally biased region" description="Basic residues" evidence="2">
    <location>
        <begin position="66"/>
        <end position="79"/>
    </location>
</feature>
<feature type="binding site" evidence="1">
    <location>
        <position position="209"/>
    </location>
    <ligand>
        <name>substrate</name>
    </ligand>
</feature>
<feature type="binding site" evidence="1">
    <location>
        <position position="229"/>
    </location>
    <ligand>
        <name>a divalent metal cation</name>
        <dbReference type="ChEBI" id="CHEBI:60240"/>
        <label>1</label>
    </ligand>
</feature>
<feature type="binding site" evidence="1">
    <location>
        <position position="240"/>
    </location>
    <ligand>
        <name>a divalent metal cation</name>
        <dbReference type="ChEBI" id="CHEBI:60240"/>
        <label>1</label>
    </ligand>
</feature>
<feature type="binding site" evidence="1">
    <location>
        <position position="240"/>
    </location>
    <ligand>
        <name>a divalent metal cation</name>
        <dbReference type="ChEBI" id="CHEBI:60240"/>
        <label>2</label>
        <note>catalytic</note>
    </ligand>
</feature>
<feature type="binding site" evidence="1">
    <location>
        <position position="309"/>
    </location>
    <ligand>
        <name>a divalent metal cation</name>
        <dbReference type="ChEBI" id="CHEBI:60240"/>
        <label>2</label>
        <note>catalytic</note>
    </ligand>
</feature>
<feature type="binding site" evidence="1">
    <location>
        <position position="317"/>
    </location>
    <ligand>
        <name>substrate</name>
    </ligand>
</feature>
<feature type="binding site" evidence="1">
    <location>
        <position position="343"/>
    </location>
    <ligand>
        <name>a divalent metal cation</name>
        <dbReference type="ChEBI" id="CHEBI:60240"/>
        <label>2</label>
        <note>catalytic</note>
    </ligand>
</feature>
<feature type="binding site" evidence="1">
    <location>
        <position position="437"/>
    </location>
    <ligand>
        <name>a divalent metal cation</name>
        <dbReference type="ChEBI" id="CHEBI:60240"/>
        <label>1</label>
    </ligand>
</feature>
<feature type="binding site" evidence="1">
    <location>
        <position position="437"/>
    </location>
    <ligand>
        <name>a divalent metal cation</name>
        <dbReference type="ChEBI" id="CHEBI:60240"/>
        <label>2</label>
        <note>catalytic</note>
    </ligand>
</feature>
<name>MAP2_PUCGT</name>
<gene>
    <name type="ORF">PGTG_16374</name>
</gene>
<proteinExistence type="inferred from homology"/>
<comment type="function">
    <text evidence="1">Cotranslationally removes the N-terminal methionine from nascent proteins. The N-terminal methionine is often cleaved when the second residue in the primary sequence is small and uncharged (Met-Ala-, Cys, Gly, Pro, Ser, Thr, or Val).</text>
</comment>
<comment type="catalytic activity">
    <reaction evidence="1">
        <text>Release of N-terminal amino acids, preferentially methionine, from peptides and arylamides.</text>
        <dbReference type="EC" id="3.4.11.18"/>
    </reaction>
</comment>
<comment type="cofactor">
    <cofactor evidence="1">
        <name>Co(2+)</name>
        <dbReference type="ChEBI" id="CHEBI:48828"/>
    </cofactor>
    <cofactor evidence="1">
        <name>Zn(2+)</name>
        <dbReference type="ChEBI" id="CHEBI:29105"/>
    </cofactor>
    <cofactor evidence="1">
        <name>Mn(2+)</name>
        <dbReference type="ChEBI" id="CHEBI:29035"/>
    </cofactor>
    <cofactor evidence="1">
        <name>Fe(2+)</name>
        <dbReference type="ChEBI" id="CHEBI:29033"/>
    </cofactor>
    <text evidence="1">Binds 2 divalent metal cations per subunit. Has a high-affinity and a low affinity metal-binding site. The true nature of the physiological cofactor is under debate. The enzyme is active with cobalt, zinc, manganese or divalent iron ions. Most likely, methionine aminopeptidases function as mononuclear Fe(2+)-metalloproteases under physiological conditions, and the catalytically relevant metal-binding site has been assigned to the histidine-containing high-affinity site.</text>
</comment>
<comment type="subcellular location">
    <subcellularLocation>
        <location evidence="1">Cytoplasm</location>
    </subcellularLocation>
</comment>
<comment type="similarity">
    <text evidence="1">Belongs to the peptidase M24A family. Methionine aminopeptidase eukaryotic type 2 subfamily.</text>
</comment>
<evidence type="ECO:0000255" key="1">
    <source>
        <dbReference type="HAMAP-Rule" id="MF_03175"/>
    </source>
</evidence>
<evidence type="ECO:0000256" key="2">
    <source>
        <dbReference type="SAM" id="MobiDB-lite"/>
    </source>
</evidence>
<sequence>MTIPVPKPAHPAAPDTNTDGLPNPKVVVPVEADEEEDDDDEEGKEDADGAVPAASHFSTHALDGTKKKKKKKKKPKKKKTGEAGAGGQSEPPRVPVSKLFPNGNYPSGEESAYLGENSYRTTSSEKRELERLAAQEDPESAENYNSIRRAAEVHRQVRRYVQQTVKPGMSMTEIAEMVEDGTRALVEVDGLQRGIGFPTGVSLNHCAAHYTPNAGDTIVLSADDVLKVDFGVQIGGRIVDSAFTMTFNNKYDKLLEAVRAATNTGIREAGIDARLSDIGASIQETMESYEVEVDGKVHKVKSIRNLTGHNILPYHIHGGKSVPIVANSDESAIMEEGDHFAVETFGSTGRGYVMDDGECSHYAKNPDVNKPIRLARAKTLLNTINKHFDTLPFCKRYLDRLGESRYYAALDNLVNLGIVQAYPPLSDIQGCMTAQYEHTIILRPTCKEVVSRGDDY</sequence>
<keyword id="KW-0031">Aminopeptidase</keyword>
<keyword id="KW-0963">Cytoplasm</keyword>
<keyword id="KW-0378">Hydrolase</keyword>
<keyword id="KW-0479">Metal-binding</keyword>
<keyword id="KW-0645">Protease</keyword>
<keyword id="KW-1185">Reference proteome</keyword>
<dbReference type="EC" id="3.4.11.18" evidence="1"/>
<dbReference type="EMBL" id="DS178343">
    <property type="protein sequence ID" value="EFP91183.1"/>
    <property type="molecule type" value="Genomic_DNA"/>
</dbReference>
<dbReference type="RefSeq" id="XP_003335602.1">
    <property type="nucleotide sequence ID" value="XM_003335554.1"/>
</dbReference>
<dbReference type="SMR" id="E3L3Q8"/>
<dbReference type="FunCoup" id="E3L3Q8">
    <property type="interactions" value="772"/>
</dbReference>
<dbReference type="STRING" id="418459.E3L3Q8"/>
<dbReference type="EnsemblFungi" id="EFP91183">
    <property type="protein sequence ID" value="EFP91183"/>
    <property type="gene ID" value="PGTG_16374"/>
</dbReference>
<dbReference type="GeneID" id="10528845"/>
<dbReference type="KEGG" id="pgr:PGTG_16374"/>
<dbReference type="VEuPathDB" id="FungiDB:PGTG_16374"/>
<dbReference type="eggNOG" id="KOG2775">
    <property type="taxonomic scope" value="Eukaryota"/>
</dbReference>
<dbReference type="HOGENOM" id="CLU_015857_7_1_1"/>
<dbReference type="InParanoid" id="E3L3Q8"/>
<dbReference type="OMA" id="PFAKRWL"/>
<dbReference type="OrthoDB" id="7848262at2759"/>
<dbReference type="Proteomes" id="UP000008783">
    <property type="component" value="Unassembled WGS sequence"/>
</dbReference>
<dbReference type="GO" id="GO:0005737">
    <property type="term" value="C:cytoplasm"/>
    <property type="evidence" value="ECO:0000318"/>
    <property type="project" value="GO_Central"/>
</dbReference>
<dbReference type="GO" id="GO:0004177">
    <property type="term" value="F:aminopeptidase activity"/>
    <property type="evidence" value="ECO:0000318"/>
    <property type="project" value="GO_Central"/>
</dbReference>
<dbReference type="GO" id="GO:0004239">
    <property type="term" value="F:initiator methionyl aminopeptidase activity"/>
    <property type="evidence" value="ECO:0007669"/>
    <property type="project" value="UniProtKB-UniRule"/>
</dbReference>
<dbReference type="GO" id="GO:0046872">
    <property type="term" value="F:metal ion binding"/>
    <property type="evidence" value="ECO:0007669"/>
    <property type="project" value="UniProtKB-UniRule"/>
</dbReference>
<dbReference type="GO" id="GO:0070006">
    <property type="term" value="F:metalloaminopeptidase activity"/>
    <property type="evidence" value="ECO:0007669"/>
    <property type="project" value="UniProtKB-UniRule"/>
</dbReference>
<dbReference type="GO" id="GO:0008235">
    <property type="term" value="F:metalloexopeptidase activity"/>
    <property type="evidence" value="ECO:0000318"/>
    <property type="project" value="GO_Central"/>
</dbReference>
<dbReference type="GO" id="GO:0006508">
    <property type="term" value="P:proteolysis"/>
    <property type="evidence" value="ECO:0007669"/>
    <property type="project" value="UniProtKB-KW"/>
</dbReference>
<dbReference type="CDD" id="cd01088">
    <property type="entry name" value="MetAP2"/>
    <property type="match status" value="1"/>
</dbReference>
<dbReference type="Gene3D" id="3.90.230.10">
    <property type="entry name" value="Creatinase/methionine aminopeptidase superfamily"/>
    <property type="match status" value="1"/>
</dbReference>
<dbReference type="Gene3D" id="1.10.10.10">
    <property type="entry name" value="Winged helix-like DNA-binding domain superfamily/Winged helix DNA-binding domain"/>
    <property type="match status" value="1"/>
</dbReference>
<dbReference type="HAMAP" id="MF_03175">
    <property type="entry name" value="MetAP_2_euk"/>
    <property type="match status" value="1"/>
</dbReference>
<dbReference type="InterPro" id="IPR036005">
    <property type="entry name" value="Creatinase/aminopeptidase-like"/>
</dbReference>
<dbReference type="InterPro" id="IPR050247">
    <property type="entry name" value="Met_Aminopeptidase_Type2"/>
</dbReference>
<dbReference type="InterPro" id="IPR000994">
    <property type="entry name" value="Pept_M24"/>
</dbReference>
<dbReference type="InterPro" id="IPR001714">
    <property type="entry name" value="Pept_M24_MAP"/>
</dbReference>
<dbReference type="InterPro" id="IPR002468">
    <property type="entry name" value="Pept_M24A_MAP2"/>
</dbReference>
<dbReference type="InterPro" id="IPR036388">
    <property type="entry name" value="WH-like_DNA-bd_sf"/>
</dbReference>
<dbReference type="InterPro" id="IPR036390">
    <property type="entry name" value="WH_DNA-bd_sf"/>
</dbReference>
<dbReference type="NCBIfam" id="TIGR00501">
    <property type="entry name" value="met_pdase_II"/>
    <property type="match status" value="1"/>
</dbReference>
<dbReference type="PANTHER" id="PTHR45777">
    <property type="entry name" value="METHIONINE AMINOPEPTIDASE 2"/>
    <property type="match status" value="1"/>
</dbReference>
<dbReference type="PANTHER" id="PTHR45777:SF2">
    <property type="entry name" value="METHIONINE AMINOPEPTIDASE 2"/>
    <property type="match status" value="1"/>
</dbReference>
<dbReference type="Pfam" id="PF00557">
    <property type="entry name" value="Peptidase_M24"/>
    <property type="match status" value="1"/>
</dbReference>
<dbReference type="PRINTS" id="PR00599">
    <property type="entry name" value="MAPEPTIDASE"/>
</dbReference>
<dbReference type="SUPFAM" id="SSF55920">
    <property type="entry name" value="Creatinase/aminopeptidase"/>
    <property type="match status" value="1"/>
</dbReference>
<dbReference type="SUPFAM" id="SSF46785">
    <property type="entry name" value="Winged helix' DNA-binding domain"/>
    <property type="match status" value="1"/>
</dbReference>
<organism>
    <name type="scientific">Puccinia graminis f. sp. tritici (strain CRL 75-36-700-3 / race SCCL)</name>
    <name type="common">Black stem rust fungus</name>
    <dbReference type="NCBI Taxonomy" id="418459"/>
    <lineage>
        <taxon>Eukaryota</taxon>
        <taxon>Fungi</taxon>
        <taxon>Dikarya</taxon>
        <taxon>Basidiomycota</taxon>
        <taxon>Pucciniomycotina</taxon>
        <taxon>Pucciniomycetes</taxon>
        <taxon>Pucciniales</taxon>
        <taxon>Pucciniaceae</taxon>
        <taxon>Puccinia</taxon>
    </lineage>
</organism>
<protein>
    <recommendedName>
        <fullName evidence="1">Methionine aminopeptidase 2</fullName>
        <shortName evidence="1">MAP 2</shortName>
        <shortName evidence="1">MetAP 2</shortName>
        <ecNumber evidence="1">3.4.11.18</ecNumber>
    </recommendedName>
    <alternativeName>
        <fullName evidence="1">Peptidase M</fullName>
    </alternativeName>
</protein>